<name>MNME_FRATO</name>
<gene>
    <name evidence="1" type="primary">mnmE</name>
    <name evidence="1" type="synonym">trmE</name>
    <name type="ordered locus">FTH_1152</name>
</gene>
<evidence type="ECO:0000255" key="1">
    <source>
        <dbReference type="HAMAP-Rule" id="MF_00379"/>
    </source>
</evidence>
<feature type="chain" id="PRO_1000060044" description="tRNA modification GTPase MnmE">
    <location>
        <begin position="1"/>
        <end position="450"/>
    </location>
</feature>
<feature type="domain" description="TrmE-type G">
    <location>
        <begin position="214"/>
        <end position="374"/>
    </location>
</feature>
<feature type="binding site" evidence="1">
    <location>
        <position position="23"/>
    </location>
    <ligand>
        <name>(6S)-5-formyl-5,6,7,8-tetrahydrofolate</name>
        <dbReference type="ChEBI" id="CHEBI:57457"/>
    </ligand>
</feature>
<feature type="binding site" evidence="1">
    <location>
        <position position="79"/>
    </location>
    <ligand>
        <name>(6S)-5-formyl-5,6,7,8-tetrahydrofolate</name>
        <dbReference type="ChEBI" id="CHEBI:57457"/>
    </ligand>
</feature>
<feature type="binding site" evidence="1">
    <location>
        <position position="118"/>
    </location>
    <ligand>
        <name>(6S)-5-formyl-5,6,7,8-tetrahydrofolate</name>
        <dbReference type="ChEBI" id="CHEBI:57457"/>
    </ligand>
</feature>
<feature type="binding site" evidence="1">
    <location>
        <begin position="224"/>
        <end position="229"/>
    </location>
    <ligand>
        <name>GTP</name>
        <dbReference type="ChEBI" id="CHEBI:37565"/>
    </ligand>
</feature>
<feature type="binding site" evidence="1">
    <location>
        <position position="224"/>
    </location>
    <ligand>
        <name>K(+)</name>
        <dbReference type="ChEBI" id="CHEBI:29103"/>
    </ligand>
</feature>
<feature type="binding site" evidence="1">
    <location>
        <position position="228"/>
    </location>
    <ligand>
        <name>Mg(2+)</name>
        <dbReference type="ChEBI" id="CHEBI:18420"/>
    </ligand>
</feature>
<feature type="binding site" evidence="1">
    <location>
        <begin position="243"/>
        <end position="249"/>
    </location>
    <ligand>
        <name>GTP</name>
        <dbReference type="ChEBI" id="CHEBI:37565"/>
    </ligand>
</feature>
<feature type="binding site" evidence="1">
    <location>
        <position position="243"/>
    </location>
    <ligand>
        <name>K(+)</name>
        <dbReference type="ChEBI" id="CHEBI:29103"/>
    </ligand>
</feature>
<feature type="binding site" evidence="1">
    <location>
        <position position="245"/>
    </location>
    <ligand>
        <name>K(+)</name>
        <dbReference type="ChEBI" id="CHEBI:29103"/>
    </ligand>
</feature>
<feature type="binding site" evidence="1">
    <location>
        <position position="248"/>
    </location>
    <ligand>
        <name>K(+)</name>
        <dbReference type="ChEBI" id="CHEBI:29103"/>
    </ligand>
</feature>
<feature type="binding site" evidence="1">
    <location>
        <position position="249"/>
    </location>
    <ligand>
        <name>Mg(2+)</name>
        <dbReference type="ChEBI" id="CHEBI:18420"/>
    </ligand>
</feature>
<feature type="binding site" evidence="1">
    <location>
        <begin position="268"/>
        <end position="271"/>
    </location>
    <ligand>
        <name>GTP</name>
        <dbReference type="ChEBI" id="CHEBI:37565"/>
    </ligand>
</feature>
<feature type="binding site" evidence="1">
    <location>
        <position position="450"/>
    </location>
    <ligand>
        <name>(6S)-5-formyl-5,6,7,8-tetrahydrofolate</name>
        <dbReference type="ChEBI" id="CHEBI:57457"/>
    </ligand>
</feature>
<proteinExistence type="inferred from homology"/>
<keyword id="KW-0963">Cytoplasm</keyword>
<keyword id="KW-0342">GTP-binding</keyword>
<keyword id="KW-0378">Hydrolase</keyword>
<keyword id="KW-0460">Magnesium</keyword>
<keyword id="KW-0479">Metal-binding</keyword>
<keyword id="KW-0547">Nucleotide-binding</keyword>
<keyword id="KW-0630">Potassium</keyword>
<keyword id="KW-0819">tRNA processing</keyword>
<reference key="1">
    <citation type="journal article" date="2006" name="J. Bacteriol.">
        <title>Chromosome rearrangement and diversification of Francisella tularensis revealed by the type B (OSU18) genome sequence.</title>
        <authorList>
            <person name="Petrosino J.F."/>
            <person name="Xiang Q."/>
            <person name="Karpathy S.E."/>
            <person name="Jiang H."/>
            <person name="Yerrapragada S."/>
            <person name="Liu Y."/>
            <person name="Gioia J."/>
            <person name="Hemphill L."/>
            <person name="Gonzalez A."/>
            <person name="Raghavan T.M."/>
            <person name="Uzman A."/>
            <person name="Fox G.E."/>
            <person name="Highlander S."/>
            <person name="Reichard M."/>
            <person name="Morton R.J."/>
            <person name="Clinkenbeard K.D."/>
            <person name="Weinstock G.M."/>
        </authorList>
    </citation>
    <scope>NUCLEOTIDE SEQUENCE [LARGE SCALE GENOMIC DNA]</scope>
    <source>
        <strain>OSU18</strain>
    </source>
</reference>
<accession>Q0BLL9</accession>
<comment type="function">
    <text evidence="1">Exhibits a very high intrinsic GTPase hydrolysis rate. Involved in the addition of a carboxymethylaminomethyl (cmnm) group at the wobble position (U34) of certain tRNAs, forming tRNA-cmnm(5)s(2)U34.</text>
</comment>
<comment type="cofactor">
    <cofactor evidence="1">
        <name>K(+)</name>
        <dbReference type="ChEBI" id="CHEBI:29103"/>
    </cofactor>
    <text evidence="1">Binds 1 potassium ion per subunit.</text>
</comment>
<comment type="subunit">
    <text evidence="1">Homodimer. Heterotetramer of two MnmE and two MnmG subunits.</text>
</comment>
<comment type="subcellular location">
    <subcellularLocation>
        <location evidence="1">Cytoplasm</location>
    </subcellularLocation>
</comment>
<comment type="similarity">
    <text evidence="1">Belongs to the TRAFAC class TrmE-Era-EngA-EngB-Septin-like GTPase superfamily. TrmE GTPase family.</text>
</comment>
<sequence length="450" mass="49822">MYTKDTIVAIATPQGNGGIGIIRISGIDALEIAEKLTKKQLKPRYATFCNVYNDNEIIDHGIVIFFKAPLSYTGEDVVEIQAHGNPFILNLIIKAALNCGARIAKAGEFTERAFLNNKLDLAQAEAVADIINASSEIAAKSAAKSLQGDFSKEINNLLEKLIYLRMYVEASIDFPEEEINFLEDQKIHSSLEEIYKVILAIKNSCKQGVILAEGITLILVGKPNAGKSSLLNALAGKESAIVTSIAGTTRDIVKEHIQINGVPMHIIDTAGLRNSDDIIESEGIKRAIKKIQEADQVLFVTDDYTNSQVKFSDIKEIIPEFYDQIPKDIDITYVHNKIDLLKEVPHNHANHIYISAENNIGIDKLKEHILNKVGYTNQNESIYTARERHVTAINNAFEHIKLAKEQLELGNGELLAEELLIVQEYLNSITGEFSSDDLLGEIFSSFCIGK</sequence>
<organism>
    <name type="scientific">Francisella tularensis subsp. holarctica (strain OSU18)</name>
    <dbReference type="NCBI Taxonomy" id="393011"/>
    <lineage>
        <taxon>Bacteria</taxon>
        <taxon>Pseudomonadati</taxon>
        <taxon>Pseudomonadota</taxon>
        <taxon>Gammaproteobacteria</taxon>
        <taxon>Thiotrichales</taxon>
        <taxon>Francisellaceae</taxon>
        <taxon>Francisella</taxon>
    </lineage>
</organism>
<protein>
    <recommendedName>
        <fullName evidence="1">tRNA modification GTPase MnmE</fullName>
        <ecNumber evidence="1">3.6.-.-</ecNumber>
    </recommendedName>
</protein>
<dbReference type="EC" id="3.6.-.-" evidence="1"/>
<dbReference type="EMBL" id="CP000437">
    <property type="protein sequence ID" value="ABI83015.1"/>
    <property type="molecule type" value="Genomic_DNA"/>
</dbReference>
<dbReference type="RefSeq" id="WP_011648701.1">
    <property type="nucleotide sequence ID" value="NC_017463.1"/>
</dbReference>
<dbReference type="SMR" id="Q0BLL9"/>
<dbReference type="KEGG" id="fth:FTH_1152"/>
<dbReference type="GO" id="GO:0005829">
    <property type="term" value="C:cytosol"/>
    <property type="evidence" value="ECO:0007669"/>
    <property type="project" value="TreeGrafter"/>
</dbReference>
<dbReference type="GO" id="GO:0005525">
    <property type="term" value="F:GTP binding"/>
    <property type="evidence" value="ECO:0007669"/>
    <property type="project" value="UniProtKB-UniRule"/>
</dbReference>
<dbReference type="GO" id="GO:0003924">
    <property type="term" value="F:GTPase activity"/>
    <property type="evidence" value="ECO:0007669"/>
    <property type="project" value="UniProtKB-UniRule"/>
</dbReference>
<dbReference type="GO" id="GO:0046872">
    <property type="term" value="F:metal ion binding"/>
    <property type="evidence" value="ECO:0007669"/>
    <property type="project" value="UniProtKB-KW"/>
</dbReference>
<dbReference type="GO" id="GO:0030488">
    <property type="term" value="P:tRNA methylation"/>
    <property type="evidence" value="ECO:0007669"/>
    <property type="project" value="TreeGrafter"/>
</dbReference>
<dbReference type="GO" id="GO:0002098">
    <property type="term" value="P:tRNA wobble uridine modification"/>
    <property type="evidence" value="ECO:0007669"/>
    <property type="project" value="TreeGrafter"/>
</dbReference>
<dbReference type="CDD" id="cd04164">
    <property type="entry name" value="trmE"/>
    <property type="match status" value="1"/>
</dbReference>
<dbReference type="CDD" id="cd14858">
    <property type="entry name" value="TrmE_N"/>
    <property type="match status" value="1"/>
</dbReference>
<dbReference type="Gene3D" id="3.40.50.300">
    <property type="entry name" value="P-loop containing nucleotide triphosphate hydrolases"/>
    <property type="match status" value="1"/>
</dbReference>
<dbReference type="Gene3D" id="3.30.1360.120">
    <property type="entry name" value="Probable tRNA modification gtpase trme, domain 1"/>
    <property type="match status" value="1"/>
</dbReference>
<dbReference type="Gene3D" id="1.20.120.430">
    <property type="entry name" value="tRNA modification GTPase MnmE domain 2"/>
    <property type="match status" value="1"/>
</dbReference>
<dbReference type="HAMAP" id="MF_00379">
    <property type="entry name" value="GTPase_MnmE"/>
    <property type="match status" value="1"/>
</dbReference>
<dbReference type="InterPro" id="IPR031168">
    <property type="entry name" value="G_TrmE"/>
</dbReference>
<dbReference type="InterPro" id="IPR006073">
    <property type="entry name" value="GTP-bd"/>
</dbReference>
<dbReference type="InterPro" id="IPR018948">
    <property type="entry name" value="GTP-bd_TrmE_N"/>
</dbReference>
<dbReference type="InterPro" id="IPR004520">
    <property type="entry name" value="GTPase_MnmE"/>
</dbReference>
<dbReference type="InterPro" id="IPR027368">
    <property type="entry name" value="MnmE_dom2"/>
</dbReference>
<dbReference type="InterPro" id="IPR025867">
    <property type="entry name" value="MnmE_helical"/>
</dbReference>
<dbReference type="InterPro" id="IPR027417">
    <property type="entry name" value="P-loop_NTPase"/>
</dbReference>
<dbReference type="InterPro" id="IPR005225">
    <property type="entry name" value="Small_GTP-bd"/>
</dbReference>
<dbReference type="InterPro" id="IPR027266">
    <property type="entry name" value="TrmE/GcvT_dom1"/>
</dbReference>
<dbReference type="NCBIfam" id="TIGR00450">
    <property type="entry name" value="mnmE_trmE_thdF"/>
    <property type="match status" value="1"/>
</dbReference>
<dbReference type="NCBIfam" id="NF003661">
    <property type="entry name" value="PRK05291.1-3"/>
    <property type="match status" value="1"/>
</dbReference>
<dbReference type="NCBIfam" id="TIGR00231">
    <property type="entry name" value="small_GTP"/>
    <property type="match status" value="1"/>
</dbReference>
<dbReference type="PANTHER" id="PTHR42714">
    <property type="entry name" value="TRNA MODIFICATION GTPASE GTPBP3"/>
    <property type="match status" value="1"/>
</dbReference>
<dbReference type="PANTHER" id="PTHR42714:SF2">
    <property type="entry name" value="TRNA MODIFICATION GTPASE GTPBP3, MITOCHONDRIAL"/>
    <property type="match status" value="1"/>
</dbReference>
<dbReference type="Pfam" id="PF01926">
    <property type="entry name" value="MMR_HSR1"/>
    <property type="match status" value="1"/>
</dbReference>
<dbReference type="Pfam" id="PF12631">
    <property type="entry name" value="MnmE_helical"/>
    <property type="match status" value="1"/>
</dbReference>
<dbReference type="Pfam" id="PF10396">
    <property type="entry name" value="TrmE_N"/>
    <property type="match status" value="1"/>
</dbReference>
<dbReference type="PRINTS" id="PR00326">
    <property type="entry name" value="GTP1OBG"/>
</dbReference>
<dbReference type="SUPFAM" id="SSF52540">
    <property type="entry name" value="P-loop containing nucleoside triphosphate hydrolases"/>
    <property type="match status" value="1"/>
</dbReference>
<dbReference type="SUPFAM" id="SSF116878">
    <property type="entry name" value="TrmE connector domain"/>
    <property type="match status" value="1"/>
</dbReference>
<dbReference type="PROSITE" id="PS51709">
    <property type="entry name" value="G_TRME"/>
    <property type="match status" value="1"/>
</dbReference>